<evidence type="ECO:0000250" key="1"/>
<evidence type="ECO:0000255" key="2">
    <source>
        <dbReference type="HAMAP-Rule" id="MF_01398"/>
    </source>
</evidence>
<dbReference type="EMBL" id="CP000157">
    <property type="protein sequence ID" value="ABC63596.1"/>
    <property type="molecule type" value="Genomic_DNA"/>
</dbReference>
<dbReference type="RefSeq" id="WP_011414430.1">
    <property type="nucleotide sequence ID" value="NC_007722.1"/>
</dbReference>
<dbReference type="SMR" id="Q2N9P5"/>
<dbReference type="STRING" id="314225.ELI_07520"/>
<dbReference type="KEGG" id="eli:ELI_07520"/>
<dbReference type="eggNOG" id="COG0711">
    <property type="taxonomic scope" value="Bacteria"/>
</dbReference>
<dbReference type="HOGENOM" id="CLU_079215_6_0_5"/>
<dbReference type="OrthoDB" id="7391503at2"/>
<dbReference type="Proteomes" id="UP000008808">
    <property type="component" value="Chromosome"/>
</dbReference>
<dbReference type="GO" id="GO:0005886">
    <property type="term" value="C:plasma membrane"/>
    <property type="evidence" value="ECO:0007669"/>
    <property type="project" value="UniProtKB-SubCell"/>
</dbReference>
<dbReference type="GO" id="GO:0045259">
    <property type="term" value="C:proton-transporting ATP synthase complex"/>
    <property type="evidence" value="ECO:0007669"/>
    <property type="project" value="UniProtKB-KW"/>
</dbReference>
<dbReference type="GO" id="GO:0046933">
    <property type="term" value="F:proton-transporting ATP synthase activity, rotational mechanism"/>
    <property type="evidence" value="ECO:0007669"/>
    <property type="project" value="UniProtKB-UniRule"/>
</dbReference>
<dbReference type="GO" id="GO:0046961">
    <property type="term" value="F:proton-transporting ATPase activity, rotational mechanism"/>
    <property type="evidence" value="ECO:0007669"/>
    <property type="project" value="TreeGrafter"/>
</dbReference>
<dbReference type="CDD" id="cd06503">
    <property type="entry name" value="ATP-synt_Fo_b"/>
    <property type="match status" value="1"/>
</dbReference>
<dbReference type="HAMAP" id="MF_01398">
    <property type="entry name" value="ATP_synth_b_bprime"/>
    <property type="match status" value="1"/>
</dbReference>
<dbReference type="InterPro" id="IPR002146">
    <property type="entry name" value="ATP_synth_b/b'su_bac/chlpt"/>
</dbReference>
<dbReference type="InterPro" id="IPR050059">
    <property type="entry name" value="ATP_synthase_B_chain"/>
</dbReference>
<dbReference type="PANTHER" id="PTHR33445:SF1">
    <property type="entry name" value="ATP SYNTHASE SUBUNIT B"/>
    <property type="match status" value="1"/>
</dbReference>
<dbReference type="PANTHER" id="PTHR33445">
    <property type="entry name" value="ATP SYNTHASE SUBUNIT B', CHLOROPLASTIC"/>
    <property type="match status" value="1"/>
</dbReference>
<dbReference type="Pfam" id="PF00430">
    <property type="entry name" value="ATP-synt_B"/>
    <property type="match status" value="1"/>
</dbReference>
<protein>
    <recommendedName>
        <fullName evidence="2">ATP synthase subunit b</fullName>
    </recommendedName>
    <alternativeName>
        <fullName evidence="2">ATP synthase F(0) sector subunit b</fullName>
    </alternativeName>
    <alternativeName>
        <fullName evidence="2">ATPase subunit I</fullName>
    </alternativeName>
    <alternativeName>
        <fullName evidence="2">F-type ATPase subunit b</fullName>
        <shortName evidence="2">F-ATPase subunit b</shortName>
    </alternativeName>
</protein>
<name>ATPF_ERYLH</name>
<feature type="chain" id="PRO_0000368472" description="ATP synthase subunit b">
    <location>
        <begin position="1"/>
        <end position="187"/>
    </location>
</feature>
<feature type="transmembrane region" description="Helical" evidence="2">
    <location>
        <begin position="36"/>
        <end position="53"/>
    </location>
</feature>
<reference key="1">
    <citation type="journal article" date="2009" name="J. Bacteriol.">
        <title>Complete genome sequence of Erythrobacter litoralis HTCC2594.</title>
        <authorList>
            <person name="Oh H.M."/>
            <person name="Giovannoni S.J."/>
            <person name="Ferriera S."/>
            <person name="Johnson J."/>
            <person name="Cho J.C."/>
        </authorList>
    </citation>
    <scope>NUCLEOTIDE SEQUENCE [LARGE SCALE GENOMIC DNA]</scope>
    <source>
        <strain>HTCC2594</strain>
    </source>
</reference>
<accession>Q2N9P5</accession>
<organism>
    <name type="scientific">Erythrobacter litoralis (strain HTCC2594)</name>
    <dbReference type="NCBI Taxonomy" id="314225"/>
    <lineage>
        <taxon>Bacteria</taxon>
        <taxon>Pseudomonadati</taxon>
        <taxon>Pseudomonadota</taxon>
        <taxon>Alphaproteobacteria</taxon>
        <taxon>Sphingomonadales</taxon>
        <taxon>Erythrobacteraceae</taxon>
        <taxon>Erythrobacter/Porphyrobacter group</taxon>
        <taxon>Erythrobacter</taxon>
    </lineage>
</organism>
<proteinExistence type="inferred from homology"/>
<gene>
    <name evidence="2" type="primary">atpF</name>
    <name type="ordered locus">ELI_07520</name>
</gene>
<sequence>MANTPEPLTTEAAQVVSETDLGAAKLLEPSALWLEPYQWVSVAMLVLIAIMLWKKVPSLVTGGLDNKIAEIKAQLDEAKALRAEAEKLRDEYTAKIANAEKDAEAMMENARHEADAILEKAEADSKALVERRKKMAEDKISAAERDAVDEVRATAAAAAAAASRKLIAEKHDAEADRKLADEVIAEL</sequence>
<comment type="function">
    <text evidence="2">F(1)F(0) ATP synthase produces ATP from ADP in the presence of a proton or sodium gradient. F-type ATPases consist of two structural domains, F(1) containing the extramembraneous catalytic core and F(0) containing the membrane proton channel, linked together by a central stalk and a peripheral stalk. During catalysis, ATP synthesis in the catalytic domain of F(1) is coupled via a rotary mechanism of the central stalk subunits to proton translocation.</text>
</comment>
<comment type="function">
    <text evidence="2">Component of the F(0) channel, it forms part of the peripheral stalk, linking F(1) to F(0).</text>
</comment>
<comment type="subunit">
    <text evidence="1">F-type ATPases have 2 components, F(1) - the catalytic core - and F(0) - the membrane proton channel. F(1) has five subunits: alpha(3), beta(3), gamma(1), delta(1), epsilon(1). F(0) has four main subunits: a(1), b(2) and c(10-14). The alpha and beta chains form an alternating ring which encloses part of the gamma chain. F(1) is attached to F(0) by a central stalk formed by the gamma and epsilon chains, while a peripheral stalk is formed by the delta and b chains (By similarity).</text>
</comment>
<comment type="subcellular location">
    <subcellularLocation>
        <location evidence="2">Cell inner membrane</location>
        <topology evidence="2">Single-pass membrane protein</topology>
    </subcellularLocation>
</comment>
<comment type="similarity">
    <text evidence="2">Belongs to the ATPase B chain family.</text>
</comment>
<keyword id="KW-0066">ATP synthesis</keyword>
<keyword id="KW-0997">Cell inner membrane</keyword>
<keyword id="KW-1003">Cell membrane</keyword>
<keyword id="KW-0138">CF(0)</keyword>
<keyword id="KW-0375">Hydrogen ion transport</keyword>
<keyword id="KW-0406">Ion transport</keyword>
<keyword id="KW-0472">Membrane</keyword>
<keyword id="KW-1185">Reference proteome</keyword>
<keyword id="KW-0812">Transmembrane</keyword>
<keyword id="KW-1133">Transmembrane helix</keyword>
<keyword id="KW-0813">Transport</keyword>